<protein>
    <recommendedName>
        <fullName evidence="1">5'-methylthioadenosine/S-adenosylhomocysteine nucleosidase</fullName>
        <shortName evidence="1">MTA/SAH nucleosidase</shortName>
        <shortName evidence="1">MTAN</shortName>
        <ecNumber evidence="1">3.2.2.9</ecNumber>
    </recommendedName>
    <alternativeName>
        <fullName evidence="1">5'-deoxyadenosine nucleosidase</fullName>
        <shortName evidence="1">DOA nucleosidase</shortName>
        <shortName evidence="1">dAdo nucleosidase</shortName>
    </alternativeName>
    <alternativeName>
        <fullName evidence="1">5'-methylthioadenosine nucleosidase</fullName>
        <shortName evidence="1">MTA nucleosidase</shortName>
    </alternativeName>
    <alternativeName>
        <fullName evidence="1">S-adenosylhomocysteine nucleosidase</fullName>
        <shortName evidence="1">AdoHcy nucleosidase</shortName>
        <shortName evidence="1">SAH nucleosidase</shortName>
        <shortName evidence="1">SRH nucleosidase</shortName>
    </alternativeName>
</protein>
<sequence>MIIGVIGAMEQEVMLLSKQLAKLNIWQQARCNIYSGWLHGKKVVLVQSGIGKVSAALGCTLLLTNFEATLVINIGSAGGLSPALAVGDIIVSEEVQYHDVNVTAFGYDKGQMAQYPLLFPASPSLVALTKQLTEHTNINVVCGQIISGDIFINGGQELYKLKRRFPQAIAVDMEVTAIAQICYLFAVPFVGIRVITDIADSVSHKSFKDNLITVVSHLSLLVSDIIQAL</sequence>
<reference key="1">
    <citation type="journal article" date="2006" name="PLoS Biol.">
        <title>Metabolic complementarity and genomics of the dual bacterial symbiosis of sharpshooters.</title>
        <authorList>
            <person name="Wu D."/>
            <person name="Daugherty S.C."/>
            <person name="Van Aken S.E."/>
            <person name="Pai G.H."/>
            <person name="Watkins K.L."/>
            <person name="Khouri H."/>
            <person name="Tallon L.J."/>
            <person name="Zaborsky J.M."/>
            <person name="Dunbar H.E."/>
            <person name="Tran P.L."/>
            <person name="Moran N.A."/>
            <person name="Eisen J.A."/>
        </authorList>
    </citation>
    <scope>NUCLEOTIDE SEQUENCE [LARGE SCALE GENOMIC DNA]</scope>
</reference>
<organism>
    <name type="scientific">Baumannia cicadellinicola subsp. Homalodisca coagulata</name>
    <dbReference type="NCBI Taxonomy" id="374463"/>
    <lineage>
        <taxon>Bacteria</taxon>
        <taxon>Pseudomonadati</taxon>
        <taxon>Pseudomonadota</taxon>
        <taxon>Gammaproteobacteria</taxon>
        <taxon>Candidatus Palibaumannia</taxon>
    </lineage>
</organism>
<feature type="chain" id="PRO_0000359284" description="5'-methylthioadenosine/S-adenosylhomocysteine nucleosidase">
    <location>
        <begin position="1"/>
        <end position="229"/>
    </location>
</feature>
<feature type="active site" description="Proton acceptor" evidence="1">
    <location>
        <position position="12"/>
    </location>
</feature>
<feature type="active site" description="Proton donor" evidence="1">
    <location>
        <position position="197"/>
    </location>
</feature>
<feature type="binding site" evidence="1">
    <location>
        <position position="78"/>
    </location>
    <ligand>
        <name>substrate</name>
    </ligand>
</feature>
<feature type="binding site" evidence="1">
    <location>
        <position position="152"/>
    </location>
    <ligand>
        <name>substrate</name>
    </ligand>
</feature>
<feature type="binding site" evidence="1">
    <location>
        <begin position="173"/>
        <end position="174"/>
    </location>
    <ligand>
        <name>substrate</name>
    </ligand>
</feature>
<name>MTNN_BAUCH</name>
<proteinExistence type="inferred from homology"/>
<accession>Q1LTN6</accession>
<evidence type="ECO:0000255" key="1">
    <source>
        <dbReference type="HAMAP-Rule" id="MF_01684"/>
    </source>
</evidence>
<comment type="function">
    <text evidence="1">Catalyzes the irreversible cleavage of the glycosidic bond in both 5'-methylthioadenosine (MTA) and S-adenosylhomocysteine (SAH/AdoHcy) to adenine and the corresponding thioribose, 5'-methylthioribose and S-ribosylhomocysteine, respectively. Also cleaves 5'-deoxyadenosine, a toxic by-product of radical S-adenosylmethionine (SAM) enzymes, into 5-deoxyribose and adenine.</text>
</comment>
<comment type="catalytic activity">
    <reaction evidence="1">
        <text>S-adenosyl-L-homocysteine + H2O = S-(5-deoxy-D-ribos-5-yl)-L-homocysteine + adenine</text>
        <dbReference type="Rhea" id="RHEA:17805"/>
        <dbReference type="ChEBI" id="CHEBI:15377"/>
        <dbReference type="ChEBI" id="CHEBI:16708"/>
        <dbReference type="ChEBI" id="CHEBI:57856"/>
        <dbReference type="ChEBI" id="CHEBI:58195"/>
        <dbReference type="EC" id="3.2.2.9"/>
    </reaction>
</comment>
<comment type="catalytic activity">
    <reaction evidence="1">
        <text>S-methyl-5'-thioadenosine + H2O = 5-(methylsulfanyl)-D-ribose + adenine</text>
        <dbReference type="Rhea" id="RHEA:13617"/>
        <dbReference type="ChEBI" id="CHEBI:15377"/>
        <dbReference type="ChEBI" id="CHEBI:16708"/>
        <dbReference type="ChEBI" id="CHEBI:17509"/>
        <dbReference type="ChEBI" id="CHEBI:78440"/>
        <dbReference type="EC" id="3.2.2.9"/>
    </reaction>
</comment>
<comment type="catalytic activity">
    <reaction evidence="1">
        <text>5'-deoxyadenosine + H2O = 5-deoxy-D-ribose + adenine</text>
        <dbReference type="Rhea" id="RHEA:29859"/>
        <dbReference type="ChEBI" id="CHEBI:15377"/>
        <dbReference type="ChEBI" id="CHEBI:16708"/>
        <dbReference type="ChEBI" id="CHEBI:17319"/>
        <dbReference type="ChEBI" id="CHEBI:149540"/>
        <dbReference type="EC" id="3.2.2.9"/>
    </reaction>
    <physiologicalReaction direction="left-to-right" evidence="1">
        <dbReference type="Rhea" id="RHEA:29860"/>
    </physiologicalReaction>
</comment>
<comment type="pathway">
    <text evidence="1">Amino-acid biosynthesis; L-methionine biosynthesis via salvage pathway; S-methyl-5-thio-alpha-D-ribose 1-phosphate from S-methyl-5'-thioadenosine (hydrolase route): step 1/2.</text>
</comment>
<comment type="similarity">
    <text evidence="1">Belongs to the PNP/UDP phosphorylase family. MtnN subfamily.</text>
</comment>
<gene>
    <name evidence="1" type="primary">mtnN</name>
    <name type="ordered locus">BCI_0224</name>
</gene>
<dbReference type="EC" id="3.2.2.9" evidence="1"/>
<dbReference type="EMBL" id="CP000238">
    <property type="protein sequence ID" value="ABF14242.1"/>
    <property type="molecule type" value="Genomic_DNA"/>
</dbReference>
<dbReference type="RefSeq" id="WP_011520411.1">
    <property type="nucleotide sequence ID" value="NC_007984.1"/>
</dbReference>
<dbReference type="SMR" id="Q1LTN6"/>
<dbReference type="STRING" id="374463.BCI_0224"/>
<dbReference type="KEGG" id="bci:BCI_0224"/>
<dbReference type="HOGENOM" id="CLU_031248_2_2_6"/>
<dbReference type="OrthoDB" id="9792278at2"/>
<dbReference type="UniPathway" id="UPA00904">
    <property type="reaction ID" value="UER00871"/>
</dbReference>
<dbReference type="Proteomes" id="UP000002427">
    <property type="component" value="Chromosome"/>
</dbReference>
<dbReference type="GO" id="GO:0005829">
    <property type="term" value="C:cytosol"/>
    <property type="evidence" value="ECO:0007669"/>
    <property type="project" value="TreeGrafter"/>
</dbReference>
<dbReference type="GO" id="GO:0008782">
    <property type="term" value="F:adenosylhomocysteine nucleosidase activity"/>
    <property type="evidence" value="ECO:0007669"/>
    <property type="project" value="UniProtKB-UniRule"/>
</dbReference>
<dbReference type="GO" id="GO:0008930">
    <property type="term" value="F:methylthioadenosine nucleosidase activity"/>
    <property type="evidence" value="ECO:0007669"/>
    <property type="project" value="UniProtKB-UniRule"/>
</dbReference>
<dbReference type="GO" id="GO:0019509">
    <property type="term" value="P:L-methionine salvage from methylthioadenosine"/>
    <property type="evidence" value="ECO:0007669"/>
    <property type="project" value="UniProtKB-UniRule"/>
</dbReference>
<dbReference type="GO" id="GO:0019284">
    <property type="term" value="P:L-methionine salvage from S-adenosylmethionine"/>
    <property type="evidence" value="ECO:0007669"/>
    <property type="project" value="TreeGrafter"/>
</dbReference>
<dbReference type="GO" id="GO:0009164">
    <property type="term" value="P:nucleoside catabolic process"/>
    <property type="evidence" value="ECO:0007669"/>
    <property type="project" value="InterPro"/>
</dbReference>
<dbReference type="CDD" id="cd09008">
    <property type="entry name" value="MTAN"/>
    <property type="match status" value="1"/>
</dbReference>
<dbReference type="Gene3D" id="3.40.50.1580">
    <property type="entry name" value="Nucleoside phosphorylase domain"/>
    <property type="match status" value="1"/>
</dbReference>
<dbReference type="HAMAP" id="MF_01684">
    <property type="entry name" value="Salvage_MtnN"/>
    <property type="match status" value="1"/>
</dbReference>
<dbReference type="InterPro" id="IPR010049">
    <property type="entry name" value="MTA_SAH_Nsdase"/>
</dbReference>
<dbReference type="InterPro" id="IPR000845">
    <property type="entry name" value="Nucleoside_phosphorylase_d"/>
</dbReference>
<dbReference type="InterPro" id="IPR035994">
    <property type="entry name" value="Nucleoside_phosphorylase_sf"/>
</dbReference>
<dbReference type="NCBIfam" id="TIGR01704">
    <property type="entry name" value="MTA_SAH-Nsdase"/>
    <property type="match status" value="1"/>
</dbReference>
<dbReference type="NCBIfam" id="NF004079">
    <property type="entry name" value="PRK05584.1"/>
    <property type="match status" value="1"/>
</dbReference>
<dbReference type="PANTHER" id="PTHR46832">
    <property type="entry name" value="5'-METHYLTHIOADENOSINE/S-ADENOSYLHOMOCYSTEINE NUCLEOSIDASE"/>
    <property type="match status" value="1"/>
</dbReference>
<dbReference type="PANTHER" id="PTHR46832:SF1">
    <property type="entry name" value="5'-METHYLTHIOADENOSINE_S-ADENOSYLHOMOCYSTEINE NUCLEOSIDASE"/>
    <property type="match status" value="1"/>
</dbReference>
<dbReference type="Pfam" id="PF01048">
    <property type="entry name" value="PNP_UDP_1"/>
    <property type="match status" value="1"/>
</dbReference>
<dbReference type="SUPFAM" id="SSF53167">
    <property type="entry name" value="Purine and uridine phosphorylases"/>
    <property type="match status" value="1"/>
</dbReference>
<keyword id="KW-0028">Amino-acid biosynthesis</keyword>
<keyword id="KW-0378">Hydrolase</keyword>
<keyword id="KW-0486">Methionine biosynthesis</keyword>
<keyword id="KW-1185">Reference proteome</keyword>